<dbReference type="EMBL" id="V00285">
    <property type="protein sequence ID" value="CAA23550.1"/>
    <property type="molecule type" value="Genomic_DNA"/>
</dbReference>
<dbReference type="EMBL" id="V00284">
    <property type="protein sequence ID" value="CAA23548.1"/>
    <property type="molecule type" value="Genomic_DNA"/>
</dbReference>
<dbReference type="EMBL" id="X13462">
    <property type="protein sequence ID" value="CAA31810.1"/>
    <property type="molecule type" value="Genomic_DNA"/>
</dbReference>
<dbReference type="EMBL" id="U00096">
    <property type="protein sequence ID" value="AAC75079.1"/>
    <property type="molecule type" value="Genomic_DNA"/>
</dbReference>
<dbReference type="EMBL" id="AP009048">
    <property type="protein sequence ID" value="BAE76570.1"/>
    <property type="molecule type" value="Genomic_DNA"/>
</dbReference>
<dbReference type="PIR" id="A03594">
    <property type="entry name" value="LFECH"/>
</dbReference>
<dbReference type="RefSeq" id="NP_416522.1">
    <property type="nucleotide sequence ID" value="NC_000913.3"/>
</dbReference>
<dbReference type="RefSeq" id="WP_001364200.1">
    <property type="nucleotide sequence ID" value="NZ_STEB01000048.1"/>
</dbReference>
<dbReference type="FunCoup" id="P60995">
    <property type="interactions" value="9"/>
</dbReference>
<dbReference type="EnsemblBacteria" id="AAC75079">
    <property type="protein sequence ID" value="AAC75079"/>
    <property type="gene ID" value="b2018"/>
</dbReference>
<dbReference type="GeneID" id="946547"/>
<dbReference type="GeneID" id="97446168"/>
<dbReference type="KEGG" id="ecj:JW2000"/>
<dbReference type="KEGG" id="eco:b2018"/>
<dbReference type="EchoBASE" id="EB1248"/>
<dbReference type="HOGENOM" id="CLU_222361_0_0_6"/>
<dbReference type="InParanoid" id="P60995"/>
<dbReference type="BioCyc" id="EcoCyc:EG11269-MONOMER"/>
<dbReference type="PRO" id="PR:P60995"/>
<dbReference type="Proteomes" id="UP000000625">
    <property type="component" value="Chromosome"/>
</dbReference>
<dbReference type="GO" id="GO:0000105">
    <property type="term" value="P:L-histidine biosynthetic process"/>
    <property type="evidence" value="ECO:0007669"/>
    <property type="project" value="UniProtKB-KW"/>
</dbReference>
<dbReference type="InterPro" id="IPR012565">
    <property type="entry name" value="His_leader"/>
</dbReference>
<dbReference type="Pfam" id="PF08047">
    <property type="entry name" value="His_leader"/>
    <property type="match status" value="1"/>
</dbReference>
<protein>
    <recommendedName>
        <fullName>his operon leader peptide</fullName>
    </recommendedName>
    <alternativeName>
        <fullName>his operon attenuator peptide</fullName>
    </alternativeName>
</protein>
<gene>
    <name type="primary">hisL</name>
    <name type="ordered locus">b2018</name>
    <name type="ordered locus">JW2000</name>
</gene>
<comment type="function">
    <text>This protein is involved in the attenuation mechanism for the control of the expression of the his operon structural genes.</text>
</comment>
<comment type="similarity">
    <text evidence="1">Belongs to the HisL family.</text>
</comment>
<organism>
    <name type="scientific">Escherichia coli (strain K12)</name>
    <dbReference type="NCBI Taxonomy" id="83333"/>
    <lineage>
        <taxon>Bacteria</taxon>
        <taxon>Pseudomonadati</taxon>
        <taxon>Pseudomonadota</taxon>
        <taxon>Gammaproteobacteria</taxon>
        <taxon>Enterobacterales</taxon>
        <taxon>Enterobacteriaceae</taxon>
        <taxon>Escherichia</taxon>
    </lineage>
</organism>
<feature type="peptide" id="PRO_0000043986" description="his operon leader peptide">
    <location>
        <begin position="1"/>
        <end position="16"/>
    </location>
</feature>
<sequence length="16" mass="2081">MTRVQFKHHHHHHHPD</sequence>
<accession>P60995</accession>
<accession>P03058</accession>
<accession>Q2MAY6</accession>
<reference key="1">
    <citation type="journal article" date="1978" name="Proc. Natl. Acad. Sci. U.S.A.">
        <title>Nucleotide sequence of the attenuator region of the histidine operon of Escherichia coli K-12.</title>
        <authorList>
            <person name="Dinocera P.P."/>
            <person name="Blasi F."/>
            <person name="Dilauro R."/>
            <person name="Frunzio R."/>
            <person name="Bruni C.B."/>
        </authorList>
    </citation>
    <scope>NUCLEOTIDE SEQUENCE [GENOMIC DNA]</scope>
    <source>
        <strain>K12</strain>
    </source>
</reference>
<reference key="2">
    <citation type="journal article" date="1981" name="Nucleic Acids Res.">
        <title>Identification, nucleotide sequence and expression of the regulatory region of the histidine operon of Escherichia coli K-12.</title>
        <authorList>
            <person name="Verde P."/>
            <person name="Frunzio R."/>
            <person name="di Nocera P.P."/>
            <person name="Blasi F."/>
            <person name="Bruni C.B."/>
        </authorList>
    </citation>
    <scope>NUCLEOTIDE SEQUENCE [GENOMIC DNA]</scope>
    <source>
        <strain>K12</strain>
    </source>
</reference>
<reference key="3">
    <citation type="journal article" date="1988" name="J. Mol. Biol.">
        <title>Structure and function of the Salmonella typhimurium and Escherichia coli K-12 histidine operons.</title>
        <authorList>
            <person name="Carlomagno M.S."/>
            <person name="Chiariotti L."/>
            <person name="Alifano P."/>
            <person name="Nappo A.G."/>
            <person name="Bruni C.B."/>
        </authorList>
    </citation>
    <scope>NUCLEOTIDE SEQUENCE [GENOMIC DNA]</scope>
    <source>
        <strain>K12</strain>
    </source>
</reference>
<reference key="4">
    <citation type="journal article" date="1997" name="Science">
        <title>The complete genome sequence of Escherichia coli K-12.</title>
        <authorList>
            <person name="Blattner F.R."/>
            <person name="Plunkett G. III"/>
            <person name="Bloch C.A."/>
            <person name="Perna N.T."/>
            <person name="Burland V."/>
            <person name="Riley M."/>
            <person name="Collado-Vides J."/>
            <person name="Glasner J.D."/>
            <person name="Rode C.K."/>
            <person name="Mayhew G.F."/>
            <person name="Gregor J."/>
            <person name="Davis N.W."/>
            <person name="Kirkpatrick H.A."/>
            <person name="Goeden M.A."/>
            <person name="Rose D.J."/>
            <person name="Mau B."/>
            <person name="Shao Y."/>
        </authorList>
    </citation>
    <scope>NUCLEOTIDE SEQUENCE [LARGE SCALE GENOMIC DNA]</scope>
    <source>
        <strain>K12 / MG1655 / ATCC 47076</strain>
    </source>
</reference>
<reference key="5">
    <citation type="journal article" date="2006" name="Mol. Syst. Biol.">
        <title>Highly accurate genome sequences of Escherichia coli K-12 strains MG1655 and W3110.</title>
        <authorList>
            <person name="Hayashi K."/>
            <person name="Morooka N."/>
            <person name="Yamamoto Y."/>
            <person name="Fujita K."/>
            <person name="Isono K."/>
            <person name="Choi S."/>
            <person name="Ohtsubo E."/>
            <person name="Baba T."/>
            <person name="Wanner B.L."/>
            <person name="Mori H."/>
            <person name="Horiuchi T."/>
        </authorList>
    </citation>
    <scope>NUCLEOTIDE SEQUENCE [LARGE SCALE GENOMIC DNA]</scope>
    <source>
        <strain>K12 / W3110 / ATCC 27325 / DSM 5911</strain>
    </source>
</reference>
<proteinExistence type="inferred from homology"/>
<name>LPHI_ECOLI</name>
<keyword id="KW-0028">Amino-acid biosynthesis</keyword>
<keyword id="KW-0368">Histidine biosynthesis</keyword>
<keyword id="KW-0428">Leader peptide</keyword>
<keyword id="KW-1185">Reference proteome</keyword>
<evidence type="ECO:0000305" key="1"/>